<proteinExistence type="evidence at protein level"/>
<sequence length="466" mass="51892">MRSTKIVCTVGPRTDSYEMIEKMIDLGVNVFRINTSHGDWNEQEQKILKIKDLREKKKKPVAILIDLAGPKIRTGYLEKEFVELKEGQIFTLTTKEILGNEHIVSVNLSSLPKDVKKGDTILLSDGEIVLEVIETTDTEVKTVVKVGGKITHRRGVNVPTADLSVESITDRDREFIKLGTLHDVEFFALSFVRKPEDVLKAKEEIRKHGKEIPVISKIETKKALERLEEIIKVSDGIMVARGDLGVEIPIEEVPIVQKEIIKLSKYYSKPVIVATQILESMIENPFPTRAEVTDIANAIFDGADALLLTAETAVGKHPLEAIKVLSKVAKEAEKKLEFFRTIEYDTSDISEAISHACWQLSESLNAKLIITPTISGSTAVRVSKYNVSQPIVALTPEEKTYYRLSLVRKVIPVLAEKCSQELEFIEKGLKKVEEMGLAEKGDLVVLTSGVPGKVGTTNTIRVLKVD</sequence>
<comment type="catalytic activity">
    <reaction>
        <text>pyruvate + ATP = phosphoenolpyruvate + ADP + H(+)</text>
        <dbReference type="Rhea" id="RHEA:18157"/>
        <dbReference type="ChEBI" id="CHEBI:15361"/>
        <dbReference type="ChEBI" id="CHEBI:15378"/>
        <dbReference type="ChEBI" id="CHEBI:30616"/>
        <dbReference type="ChEBI" id="CHEBI:58702"/>
        <dbReference type="ChEBI" id="CHEBI:456216"/>
        <dbReference type="EC" id="2.7.1.40"/>
    </reaction>
</comment>
<comment type="cofactor">
    <cofactor evidence="3">
        <name>a divalent metal cation</name>
        <dbReference type="ChEBI" id="CHEBI:60240"/>
    </cofactor>
</comment>
<comment type="activity regulation">
    <text>Allosterically activated by AMP and inhibited by ATP.</text>
</comment>
<comment type="biophysicochemical properties">
    <kinetics>
        <Vmax evidence="3">578.0 umol/min/mg enzyme (at 65 degrees Celsius)</Vmax>
    </kinetics>
    <phDependence>
        <text evidence="3">Optimum pH is 5.9-6.0.</text>
    </phDependence>
    <temperatureDependence>
        <text evidence="3">Optimum temperature is 80 degrees Celsius for the recombinant enzyme. Thermostable up to 85 degrees Celsius.</text>
    </temperatureDependence>
</comment>
<comment type="pathway">
    <text>Carbohydrate degradation; glycolysis; pyruvate from D-glyceraldehyde 3-phosphate: step 5/5.</text>
</comment>
<comment type="subunit">
    <text evidence="3">Homotetramer.</text>
</comment>
<comment type="similarity">
    <text evidence="4">Belongs to the pyruvate kinase family.</text>
</comment>
<gene>
    <name type="primary">pyk</name>
    <name type="ordered locus">TM_0208</name>
</gene>
<name>KPYK_THEMA</name>
<feature type="chain" id="PRO_0000295179" description="Pyruvate kinase">
    <location>
        <begin position="1"/>
        <end position="466"/>
    </location>
</feature>
<feature type="binding site" evidence="1">
    <location>
        <position position="32"/>
    </location>
    <ligand>
        <name>substrate</name>
    </ligand>
</feature>
<feature type="binding site" evidence="2">
    <location>
        <begin position="34"/>
        <end position="37"/>
    </location>
    <ligand>
        <name>ATP</name>
        <dbReference type="ChEBI" id="CHEBI:30616"/>
    </ligand>
</feature>
<feature type="binding site" evidence="1">
    <location>
        <position position="34"/>
    </location>
    <ligand>
        <name>K(+)</name>
        <dbReference type="ChEBI" id="CHEBI:29103"/>
    </ligand>
</feature>
<feature type="binding site" evidence="1">
    <location>
        <position position="36"/>
    </location>
    <ligand>
        <name>K(+)</name>
        <dbReference type="ChEBI" id="CHEBI:29103"/>
    </ligand>
</feature>
<feature type="binding site" evidence="1">
    <location>
        <position position="66"/>
    </location>
    <ligand>
        <name>K(+)</name>
        <dbReference type="ChEBI" id="CHEBI:29103"/>
    </ligand>
</feature>
<feature type="binding site" evidence="2">
    <location>
        <position position="73"/>
    </location>
    <ligand>
        <name>ATP</name>
        <dbReference type="ChEBI" id="CHEBI:30616"/>
    </ligand>
</feature>
<feature type="binding site" evidence="1">
    <location>
        <position position="219"/>
    </location>
    <ligand>
        <name>Mg(2+)</name>
        <dbReference type="ChEBI" id="CHEBI:18420"/>
    </ligand>
</feature>
<feature type="binding site" evidence="1">
    <location>
        <position position="242"/>
    </location>
    <ligand>
        <name>substrate</name>
    </ligand>
</feature>
<feature type="binding site" evidence="1">
    <location>
        <position position="243"/>
    </location>
    <ligand>
        <name>Mg(2+)</name>
        <dbReference type="ChEBI" id="CHEBI:18420"/>
    </ligand>
</feature>
<feature type="binding site" evidence="1">
    <location>
        <position position="243"/>
    </location>
    <ligand>
        <name>substrate</name>
    </ligand>
</feature>
<feature type="binding site" evidence="1">
    <location>
        <position position="275"/>
    </location>
    <ligand>
        <name>substrate</name>
    </ligand>
</feature>
<feature type="site" description="Transition state stabilizer" evidence="1">
    <location>
        <position position="217"/>
    </location>
</feature>
<reference key="1">
    <citation type="journal article" date="1999" name="Nature">
        <title>Evidence for lateral gene transfer between Archaea and Bacteria from genome sequence of Thermotoga maritima.</title>
        <authorList>
            <person name="Nelson K.E."/>
            <person name="Clayton R.A."/>
            <person name="Gill S.R."/>
            <person name="Gwinn M.L."/>
            <person name="Dodson R.J."/>
            <person name="Haft D.H."/>
            <person name="Hickey E.K."/>
            <person name="Peterson J.D."/>
            <person name="Nelson W.C."/>
            <person name="Ketchum K.A."/>
            <person name="McDonald L.A."/>
            <person name="Utterback T.R."/>
            <person name="Malek J.A."/>
            <person name="Linher K.D."/>
            <person name="Garrett M.M."/>
            <person name="Stewart A.M."/>
            <person name="Cotton M.D."/>
            <person name="Pratt M.S."/>
            <person name="Phillips C.A."/>
            <person name="Richardson D.L."/>
            <person name="Heidelberg J.F."/>
            <person name="Sutton G.G."/>
            <person name="Fleischmann R.D."/>
            <person name="Eisen J.A."/>
            <person name="White O."/>
            <person name="Salzberg S.L."/>
            <person name="Smith H.O."/>
            <person name="Venter J.C."/>
            <person name="Fraser C.M."/>
        </authorList>
    </citation>
    <scope>NUCLEOTIDE SEQUENCE [LARGE SCALE GENOMIC DNA]</scope>
    <source>
        <strain>ATCC 43589 / DSM 3109 / JCM 10099 / NBRC 100826 / MSB8</strain>
    </source>
</reference>
<reference key="2">
    <citation type="journal article" date="2003" name="J. Biol. Chem.">
        <title>Comparative analysis of pyruvate kinases from the hyperthermophilic archaea Archaeoglobus fulgidus, Aeropyrum pernix, and Pyrobaculum aerophilum and the hyperthermophilic bacterium Thermotoga maritima: unusual regulatory properties in hyperthermophilic archaea.</title>
        <authorList>
            <person name="Johnsen U."/>
            <person name="Hansen T."/>
            <person name="Schoenheit P."/>
        </authorList>
    </citation>
    <scope>BIOPHYSICOCHEMICAL PROPERTIES</scope>
    <scope>COFACTOR</scope>
    <scope>SUBUNIT</scope>
    <scope>REGULATION</scope>
    <source>
        <strain>ATCC 43589 / DSM 3109 / JCM 10099 / NBRC 100826 / MSB8</strain>
    </source>
</reference>
<keyword id="KW-0021">Allosteric enzyme</keyword>
<keyword id="KW-0067">ATP-binding</keyword>
<keyword id="KW-0324">Glycolysis</keyword>
<keyword id="KW-0418">Kinase</keyword>
<keyword id="KW-0460">Magnesium</keyword>
<keyword id="KW-0479">Metal-binding</keyword>
<keyword id="KW-0547">Nucleotide-binding</keyword>
<keyword id="KW-0630">Potassium</keyword>
<keyword id="KW-0670">Pyruvate</keyword>
<keyword id="KW-1185">Reference proteome</keyword>
<keyword id="KW-0808">Transferase</keyword>
<evidence type="ECO:0000250" key="1"/>
<evidence type="ECO:0000250" key="2">
    <source>
        <dbReference type="UniProtKB" id="P14618"/>
    </source>
</evidence>
<evidence type="ECO:0000269" key="3">
    <source>
    </source>
</evidence>
<evidence type="ECO:0000305" key="4"/>
<dbReference type="EC" id="2.7.1.40"/>
<dbReference type="EMBL" id="AE000512">
    <property type="protein sequence ID" value="AAD35300.1"/>
    <property type="molecule type" value="Genomic_DNA"/>
</dbReference>
<dbReference type="PIR" id="B72406">
    <property type="entry name" value="B72406"/>
</dbReference>
<dbReference type="RefSeq" id="NP_228023.1">
    <property type="nucleotide sequence ID" value="NC_000853.1"/>
</dbReference>
<dbReference type="RefSeq" id="WP_008193903.1">
    <property type="nucleotide sequence ID" value="NZ_CP011107.1"/>
</dbReference>
<dbReference type="SMR" id="Q9WY51"/>
<dbReference type="FunCoup" id="Q9WY51">
    <property type="interactions" value="301"/>
</dbReference>
<dbReference type="STRING" id="243274.TM_0208"/>
<dbReference type="PaxDb" id="243274-THEMA_03685"/>
<dbReference type="EnsemblBacteria" id="AAD35300">
    <property type="protein sequence ID" value="AAD35300"/>
    <property type="gene ID" value="TM_0208"/>
</dbReference>
<dbReference type="KEGG" id="tma:TM0208"/>
<dbReference type="KEGG" id="tmi:THEMA_03685"/>
<dbReference type="KEGG" id="tmm:Tmari_0206"/>
<dbReference type="KEGG" id="tmw:THMA_0215"/>
<dbReference type="eggNOG" id="COG0469">
    <property type="taxonomic scope" value="Bacteria"/>
</dbReference>
<dbReference type="InParanoid" id="Q9WY51"/>
<dbReference type="OrthoDB" id="9812123at2"/>
<dbReference type="BioCyc" id="MetaCyc:MONOMER-4887"/>
<dbReference type="UniPathway" id="UPA00109">
    <property type="reaction ID" value="UER00188"/>
</dbReference>
<dbReference type="Proteomes" id="UP000008183">
    <property type="component" value="Chromosome"/>
</dbReference>
<dbReference type="GO" id="GO:0005737">
    <property type="term" value="C:cytoplasm"/>
    <property type="evidence" value="ECO:0000318"/>
    <property type="project" value="GO_Central"/>
</dbReference>
<dbReference type="GO" id="GO:0005829">
    <property type="term" value="C:cytosol"/>
    <property type="evidence" value="ECO:0000318"/>
    <property type="project" value="GO_Central"/>
</dbReference>
<dbReference type="GO" id="GO:0005524">
    <property type="term" value="F:ATP binding"/>
    <property type="evidence" value="ECO:0007669"/>
    <property type="project" value="UniProtKB-KW"/>
</dbReference>
<dbReference type="GO" id="GO:0016301">
    <property type="term" value="F:kinase activity"/>
    <property type="evidence" value="ECO:0007669"/>
    <property type="project" value="UniProtKB-KW"/>
</dbReference>
<dbReference type="GO" id="GO:0000287">
    <property type="term" value="F:magnesium ion binding"/>
    <property type="evidence" value="ECO:0007669"/>
    <property type="project" value="InterPro"/>
</dbReference>
<dbReference type="GO" id="GO:0030955">
    <property type="term" value="F:potassium ion binding"/>
    <property type="evidence" value="ECO:0007669"/>
    <property type="project" value="InterPro"/>
</dbReference>
<dbReference type="GO" id="GO:0004743">
    <property type="term" value="F:pyruvate kinase activity"/>
    <property type="evidence" value="ECO:0000318"/>
    <property type="project" value="GO_Central"/>
</dbReference>
<dbReference type="GO" id="GO:0006096">
    <property type="term" value="P:glycolytic process"/>
    <property type="evidence" value="ECO:0000318"/>
    <property type="project" value="GO_Central"/>
</dbReference>
<dbReference type="FunFam" id="2.40.33.10:FF:000001">
    <property type="entry name" value="Pyruvate kinase"/>
    <property type="match status" value="1"/>
</dbReference>
<dbReference type="Gene3D" id="3.20.20.60">
    <property type="entry name" value="Phosphoenolpyruvate-binding domains"/>
    <property type="match status" value="1"/>
</dbReference>
<dbReference type="Gene3D" id="2.40.33.10">
    <property type="entry name" value="PK beta-barrel domain-like"/>
    <property type="match status" value="1"/>
</dbReference>
<dbReference type="Gene3D" id="3.40.1380.20">
    <property type="entry name" value="Pyruvate kinase, C-terminal domain"/>
    <property type="match status" value="1"/>
</dbReference>
<dbReference type="InterPro" id="IPR001697">
    <property type="entry name" value="Pyr_Knase"/>
</dbReference>
<dbReference type="InterPro" id="IPR015813">
    <property type="entry name" value="Pyrv/PenolPyrv_kinase-like_dom"/>
</dbReference>
<dbReference type="InterPro" id="IPR040442">
    <property type="entry name" value="Pyrv_kinase-like_dom_sf"/>
</dbReference>
<dbReference type="InterPro" id="IPR011037">
    <property type="entry name" value="Pyrv_Knase-like_insert_dom_sf"/>
</dbReference>
<dbReference type="InterPro" id="IPR015793">
    <property type="entry name" value="Pyrv_Knase_brl"/>
</dbReference>
<dbReference type="InterPro" id="IPR015795">
    <property type="entry name" value="Pyrv_Knase_C"/>
</dbReference>
<dbReference type="InterPro" id="IPR036918">
    <property type="entry name" value="Pyrv_Knase_C_sf"/>
</dbReference>
<dbReference type="InterPro" id="IPR015806">
    <property type="entry name" value="Pyrv_Knase_insert_dom_sf"/>
</dbReference>
<dbReference type="NCBIfam" id="NF004491">
    <property type="entry name" value="PRK05826.1"/>
    <property type="match status" value="1"/>
</dbReference>
<dbReference type="NCBIfam" id="NF004978">
    <property type="entry name" value="PRK06354.1"/>
    <property type="match status" value="1"/>
</dbReference>
<dbReference type="NCBIfam" id="TIGR01064">
    <property type="entry name" value="pyruv_kin"/>
    <property type="match status" value="1"/>
</dbReference>
<dbReference type="PANTHER" id="PTHR11817">
    <property type="entry name" value="PYRUVATE KINASE"/>
    <property type="match status" value="1"/>
</dbReference>
<dbReference type="Pfam" id="PF00224">
    <property type="entry name" value="PK"/>
    <property type="match status" value="1"/>
</dbReference>
<dbReference type="Pfam" id="PF02887">
    <property type="entry name" value="PK_C"/>
    <property type="match status" value="1"/>
</dbReference>
<dbReference type="PRINTS" id="PR01050">
    <property type="entry name" value="PYRUVTKNASE"/>
</dbReference>
<dbReference type="SUPFAM" id="SSF51621">
    <property type="entry name" value="Phosphoenolpyruvate/pyruvate domain"/>
    <property type="match status" value="1"/>
</dbReference>
<dbReference type="SUPFAM" id="SSF50800">
    <property type="entry name" value="PK beta-barrel domain-like"/>
    <property type="match status" value="1"/>
</dbReference>
<dbReference type="SUPFAM" id="SSF52935">
    <property type="entry name" value="PK C-terminal domain-like"/>
    <property type="match status" value="1"/>
</dbReference>
<protein>
    <recommendedName>
        <fullName>Pyruvate kinase</fullName>
        <shortName>PK</shortName>
        <ecNumber>2.7.1.40</ecNumber>
    </recommendedName>
</protein>
<organism>
    <name type="scientific">Thermotoga maritima (strain ATCC 43589 / DSM 3109 / JCM 10099 / NBRC 100826 / MSB8)</name>
    <dbReference type="NCBI Taxonomy" id="243274"/>
    <lineage>
        <taxon>Bacteria</taxon>
        <taxon>Thermotogati</taxon>
        <taxon>Thermotogota</taxon>
        <taxon>Thermotogae</taxon>
        <taxon>Thermotogales</taxon>
        <taxon>Thermotogaceae</taxon>
        <taxon>Thermotoga</taxon>
    </lineage>
</organism>
<accession>Q9WY51</accession>